<protein>
    <recommendedName>
        <fullName>Glycoprotein</fullName>
    </recommendedName>
</protein>
<comment type="function">
    <text evidence="1">Attaches the virus to host cellular receptor, inducing endocytosis of the virion. In the endosome, the acidic pH induces conformational changes in the glycoprotein trimer, which trigger fusion between virus and cell membrane (By similarity).</text>
</comment>
<comment type="subunit">
    <text evidence="1">Homotrimer. Interacts with matrix protein (By similarity).</text>
</comment>
<comment type="subcellular location">
    <subcellularLocation>
        <location evidence="4">Virion membrane</location>
        <topology evidence="4">Single-pass type I membrane protein</topology>
    </subcellularLocation>
</comment>
<comment type="PTM">
    <text evidence="1">Glycosylated and palmitoylated by host. Glycosylation is crucial for glycoprotein export at the cell surface (By similarity).</text>
</comment>
<comment type="miscellaneous">
    <text evidence="1">Arg-352 is highly involved in rabies virus pathogenicity. Its mutation dramatically attenuates the virus (By similarity).</text>
</comment>
<comment type="similarity">
    <text evidence="4">Belongs to the lyssavirus glycoprotein family.</text>
</comment>
<evidence type="ECO:0000250" key="1"/>
<evidence type="ECO:0000255" key="2"/>
<evidence type="ECO:0000256" key="3">
    <source>
        <dbReference type="SAM" id="MobiDB-lite"/>
    </source>
</evidence>
<evidence type="ECO:0000305" key="4"/>
<sequence length="524" mass="58544">MPFQAVLSALLSALTLCVGKFPIYTIPDKLGPWSPIDIHHLSCPNNIVVEDEGCTTLTVFSYMELKVGYITTIKVNGFTCTGVVTEAETYTNFVGYVTTTFKRKHFRPSPSACRDAYSWKTAGDPRYEESLHNPYPDSHWLRTVTTTKESVLIISPSVADMDAYDKTLYSKIFLNGKCSGVSQVSPFCSTNHDYTIWMPENPNPGVSCDIFTTSKGKKATKDGKLCGFVDERGLYKSLKGACKLKLCGISGMRLMDGSWVSIQNHDEAKWCSPDQLVNIHDFHSDEVEHLIAEELVKKREECLDALESIMTTKSISFRRLSHLRKLVPGFGKAYTIINKTLMEADAHYKSIREWTDVIPSKGCLMAGGRCYPHHNGVFFNGIILSPDGHVLIPEMQSAMLQQHIELLESSVIPLMHPLADPSTIFKKDDGAEDFVEVHLPDVQKQISGIDLGLPEWKRYFLIGVSALAFLALMIFIAACCRRVKRKKRAKPNPVELIRKVSVTSQSGRPIPSWESYKVETGGQS</sequence>
<accession>A4UHQ6</accession>
<accession>Q49IT8</accession>
<accession>Q49IT9</accession>
<accession>Q49IU1</accession>
<accession>Q49IU2</accession>
<accession>Q49LL3</accession>
<reference key="1">
    <citation type="journal article" date="2005" name="J. Virol.">
        <title>Phylogeography, population dynamics, and molecular evolution of European bat lyssaviruses.</title>
        <authorList>
            <person name="Davis P.L."/>
            <person name="Holmes E.C."/>
            <person name="Larrous F."/>
            <person name="Van der Poel W.H."/>
            <person name="Tjornehoj K."/>
            <person name="Alonso W.J."/>
            <person name="Bourhy H."/>
        </authorList>
    </citation>
    <scope>NUCLEOTIDE SEQUENCE [GENOMIC RNA]</scope>
    <source>
        <strain>Isolate Holland/G9018/1987</strain>
        <strain>Isolate Holland/G9375/1993</strain>
        <strain>Isolate Holland/G94112/1989</strain>
        <strain>Isolate Switzerland/G9337/1993</strain>
    </source>
</reference>
<reference key="2">
    <citation type="journal article" date="2007" name="J. Gen. Virol.">
        <title>Comparative analysis of the full genome sequence of European bat lyssavirus type 1 and type 2 with other lyssaviruses and evidence for a conserved transcription termination and polyadenylation motif in the G-L 3' non-translated region.</title>
        <authorList>
            <person name="Marston D.A."/>
            <person name="McElhinney L.M."/>
            <person name="Johnson N."/>
            <person name="Muller T."/>
            <person name="Conzelmann K.K."/>
            <person name="Tordo N."/>
            <person name="Fooks A.R."/>
        </authorList>
    </citation>
    <scope>NUCLEOTIDE SEQUENCE [GENOMIC RNA]</scope>
</reference>
<reference key="3">
    <citation type="journal article" date="2005" name="Vaccine">
        <title>Rabies human diploid cell vaccine elicits cross-neutralising and cross-protecting immune responses against European and Australian bat lyssaviruses.</title>
        <authorList>
            <person name="Brookes S.M."/>
            <person name="Parsons G."/>
            <person name="Johnson N."/>
            <person name="McElhinney L.M."/>
            <person name="Fooks A.R."/>
        </authorList>
    </citation>
    <scope>NUCLEOTIDE SEQUENCE [GENOMIC RNA] OF 7-524</scope>
    <source>
        <strain>Isolate England/RV628/1996</strain>
    </source>
</reference>
<organismHost>
    <name type="scientific">Mammalia</name>
    <dbReference type="NCBI Taxonomy" id="40674"/>
</organismHost>
<proteinExistence type="inferred from homology"/>
<dbReference type="EMBL" id="AY863343">
    <property type="protein sequence ID" value="AAX62810.1"/>
    <property type="molecule type" value="Genomic_RNA"/>
</dbReference>
<dbReference type="EMBL" id="AY863344">
    <property type="protein sequence ID" value="AAX62811.1"/>
    <property type="molecule type" value="Genomic_RNA"/>
</dbReference>
<dbReference type="EMBL" id="AY863346">
    <property type="protein sequence ID" value="AAX62813.1"/>
    <property type="molecule type" value="Genomic_RNA"/>
</dbReference>
<dbReference type="EMBL" id="AY863347">
    <property type="protein sequence ID" value="AAX62814.1"/>
    <property type="molecule type" value="Genomic_RNA"/>
</dbReference>
<dbReference type="EMBL" id="EF157977">
    <property type="protein sequence ID" value="ABO65251.1"/>
    <property type="molecule type" value="Genomic_RNA"/>
</dbReference>
<dbReference type="EMBL" id="AY721613">
    <property type="protein sequence ID" value="AAW50816.1"/>
    <property type="molecule type" value="Genomic_RNA"/>
</dbReference>
<dbReference type="RefSeq" id="YP_001285396.1">
    <property type="nucleotide sequence ID" value="NC_009528.2"/>
</dbReference>
<dbReference type="SMR" id="A4UHQ6"/>
<dbReference type="GeneID" id="5219916"/>
<dbReference type="KEGG" id="vg:5219916"/>
<dbReference type="Proteomes" id="UP000007206">
    <property type="component" value="Segment"/>
</dbReference>
<dbReference type="GO" id="GO:0016020">
    <property type="term" value="C:membrane"/>
    <property type="evidence" value="ECO:0007669"/>
    <property type="project" value="UniProtKB-KW"/>
</dbReference>
<dbReference type="GO" id="GO:0019031">
    <property type="term" value="C:viral envelope"/>
    <property type="evidence" value="ECO:0007669"/>
    <property type="project" value="UniProtKB-KW"/>
</dbReference>
<dbReference type="GO" id="GO:0055036">
    <property type="term" value="C:virion membrane"/>
    <property type="evidence" value="ECO:0007669"/>
    <property type="project" value="UniProtKB-SubCell"/>
</dbReference>
<dbReference type="Gene3D" id="2.30.29.130">
    <property type="match status" value="1"/>
</dbReference>
<dbReference type="InterPro" id="IPR055448">
    <property type="entry name" value="PH_Rhabdo_glycop"/>
</dbReference>
<dbReference type="InterPro" id="IPR055447">
    <property type="entry name" value="Rhabdo_glycop_CD"/>
</dbReference>
<dbReference type="InterPro" id="IPR001903">
    <property type="entry name" value="Rhabdo_glycop_FD"/>
</dbReference>
<dbReference type="Pfam" id="PF24834">
    <property type="entry name" value="PH_Rhabdo_glycop"/>
    <property type="match status" value="1"/>
</dbReference>
<dbReference type="Pfam" id="PF24833">
    <property type="entry name" value="Rhabdo_glycop_CD"/>
    <property type="match status" value="1"/>
</dbReference>
<dbReference type="Pfam" id="PF00974">
    <property type="entry name" value="Rhabdo_glycop_FD"/>
    <property type="match status" value="1"/>
</dbReference>
<dbReference type="SUPFAM" id="SSF161008">
    <property type="entry name" value="Viral glycoprotein ectodomain-like"/>
    <property type="match status" value="1"/>
</dbReference>
<gene>
    <name type="primary">G</name>
</gene>
<keyword id="KW-0325">Glycoprotein</keyword>
<keyword id="KW-0449">Lipoprotein</keyword>
<keyword id="KW-0472">Membrane</keyword>
<keyword id="KW-0564">Palmitate</keyword>
<keyword id="KW-1185">Reference proteome</keyword>
<keyword id="KW-0732">Signal</keyword>
<keyword id="KW-0812">Transmembrane</keyword>
<keyword id="KW-1133">Transmembrane helix</keyword>
<keyword id="KW-0261">Viral envelope protein</keyword>
<keyword id="KW-0946">Virion</keyword>
<organism>
    <name type="scientific">European bat lyssavirus 2 (strain Human/Scotland/RV1333/2002)</name>
    <name type="common">EBLV2</name>
    <dbReference type="NCBI Taxonomy" id="453116"/>
    <lineage>
        <taxon>Viruses</taxon>
        <taxon>Riboviria</taxon>
        <taxon>Orthornavirae</taxon>
        <taxon>Negarnaviricota</taxon>
        <taxon>Haploviricotina</taxon>
        <taxon>Monjiviricetes</taxon>
        <taxon>Mononegavirales</taxon>
        <taxon>Rhabdoviridae</taxon>
        <taxon>Alpharhabdovirinae</taxon>
        <taxon>Lyssavirus</taxon>
        <taxon>Lyssavirus hamburg</taxon>
    </lineage>
</organism>
<name>GLYCO_EBLV2</name>
<feature type="signal peptide" evidence="2">
    <location>
        <begin position="1"/>
        <end position="19"/>
    </location>
</feature>
<feature type="chain" id="PRO_0000299100" description="Glycoprotein">
    <location>
        <begin position="20"/>
        <end position="524"/>
    </location>
</feature>
<feature type="topological domain" description="Virion surface" evidence="2">
    <location>
        <begin position="20"/>
        <end position="459"/>
    </location>
</feature>
<feature type="transmembrane region" description="Helical" evidence="2">
    <location>
        <begin position="460"/>
        <end position="480"/>
    </location>
</feature>
<feature type="topological domain" description="Intravirion" evidence="2">
    <location>
        <begin position="481"/>
        <end position="524"/>
    </location>
</feature>
<feature type="region of interest" description="Disordered" evidence="3">
    <location>
        <begin position="503"/>
        <end position="524"/>
    </location>
</feature>
<feature type="lipid moiety-binding region" description="S-palmitoyl cysteine; by host" evidence="1">
    <location>
        <position position="480"/>
    </location>
</feature>
<feature type="sequence variant" description="In strain: Isolate Switzerland/G9337/1993.">
    <original>A</original>
    <variation>T</variation>
    <location>
        <position position="5"/>
    </location>
</feature>
<feature type="sequence variant" description="In strain: Isolate Holland/G9018/1987.">
    <original>R</original>
    <variation>K</variation>
    <location>
        <position position="142"/>
    </location>
</feature>
<feature type="sequence variant" description="In strain: Isolate Holland/G9018/1987.">
    <original>K</original>
    <variation>Q</variation>
    <location>
        <position position="148"/>
    </location>
</feature>
<feature type="sequence variant" description="In strain: Isolate Switzerland/G9337/1993.">
    <original>V</original>
    <variation>L</variation>
    <location>
        <position position="151"/>
    </location>
</feature>
<feature type="sequence variant" description="In strain: Isolate Switzerland/G9337/1993.">
    <original>D</original>
    <variation>N</variation>
    <location>
        <position position="160"/>
    </location>
</feature>
<feature type="sequence variant" description="In strain: Isolate Switzerland/G9337/1993.">
    <original>T</original>
    <variation>A</variation>
    <location>
        <position position="212"/>
    </location>
</feature>
<feature type="sequence variant" description="In strain: Isolate Holland/G9375/1993.">
    <original>E</original>
    <variation>A</variation>
    <location>
        <position position="267"/>
    </location>
</feature>
<feature type="sequence variant" description="In strain: Isolate England/RV628/1996.">
    <original>S</original>
    <variation>T</variation>
    <location>
        <position position="321"/>
    </location>
</feature>
<feature type="sequence variant" description="In strain: Isolate Holland/G9018/1987 and Isolate Holland/G94112/1989.">
    <original>I</original>
    <variation>V</variation>
    <location>
        <position position="336"/>
    </location>
</feature>